<sequence>MFGALIKKIVGSKNERELRRLWPIVEQINHLEAEISSLSDDQLRNKTTEFKERYARGETLDSLLPEAFAVCREAGKRVLGMRHFDVQLIGGMVLHQGKIAEMKTGEGKTLVATLPSYLNALTGRGVHVITVNDYLARRDSEWMGRIHSFLGLSVGVIIHGLDDDERREAYNADITYGTNNEFGFDYLRDNMKFSLDDYVQRDFHYSIVDEVDSILIDEARTPLIISGPTEDSTDKYYIIDRIIPLLKKGEVLEEEANTLSGKRKRYTGDFTVDEKSKSATLTEEGVLKVEKLLKVDNLYDPRNMETLHHVNQALRAHALFKLDVDYVVKEGEVLIVDEFTGRLMPGRRWSDGLHQAIEAKEGVKIENENQTLATITFQNYFRMYEKLSGMTGTADTEAEEFHKIYKLDVVVIPTNRVLLRPDFPDVIYKTEGEKFNAVIEEIRELHAKGQPVLVGTISIEKSEVLSELLKRQGIPHNVLNAKQHEREAEIVAQGGRKGMITIATNMAGRGTDILLGGNADAMAKQWRRGNPEASDGEYERVLAQFKEQCANEHDEVVKLGGLHILGTERHESRRIDNQLRGRSGRQGDPGSSRFYLSLQDDLLRIFGSERVAKIMDMLKIEEGEAITHGLITKAIENAQRKVEAHNFEIRKHLIEYDDVMNKQREVIYAQRREILAGEGIRESFLDMVDETVADLAAGYAIDKVPAQEWDWQGMGDSIYKIFGFQVDIPAETMERLNPFNLRELLQEKVRELYTAKVAEFGDELMDHLIKVIMLQSIDTQWKDHLLSIDHLKEGIGLRGYGQKDPKQEYKKEAYQLFMDMMLRTREEVVEKIFWVQIAREEDVEKMEEQQKRQRLVFNLGDEPEAQQPVTSKKVGRNEPCPCGSGKKYKQCCGK</sequence>
<dbReference type="EC" id="7.4.2.8" evidence="1"/>
<dbReference type="EMBL" id="CP000698">
    <property type="protein sequence ID" value="ABQ25984.1"/>
    <property type="molecule type" value="Genomic_DNA"/>
</dbReference>
<dbReference type="RefSeq" id="WP_011938689.1">
    <property type="nucleotide sequence ID" value="NC_009483.1"/>
</dbReference>
<dbReference type="SMR" id="A5GEX9"/>
<dbReference type="STRING" id="351605.Gura_1794"/>
<dbReference type="KEGG" id="gur:Gura_1794"/>
<dbReference type="HOGENOM" id="CLU_005314_3_0_7"/>
<dbReference type="OrthoDB" id="9805579at2"/>
<dbReference type="Proteomes" id="UP000006695">
    <property type="component" value="Chromosome"/>
</dbReference>
<dbReference type="GO" id="GO:0031522">
    <property type="term" value="C:cell envelope Sec protein transport complex"/>
    <property type="evidence" value="ECO:0007669"/>
    <property type="project" value="TreeGrafter"/>
</dbReference>
<dbReference type="GO" id="GO:0005829">
    <property type="term" value="C:cytosol"/>
    <property type="evidence" value="ECO:0007669"/>
    <property type="project" value="TreeGrafter"/>
</dbReference>
<dbReference type="GO" id="GO:0005886">
    <property type="term" value="C:plasma membrane"/>
    <property type="evidence" value="ECO:0007669"/>
    <property type="project" value="UniProtKB-SubCell"/>
</dbReference>
<dbReference type="GO" id="GO:0005524">
    <property type="term" value="F:ATP binding"/>
    <property type="evidence" value="ECO:0007669"/>
    <property type="project" value="UniProtKB-UniRule"/>
</dbReference>
<dbReference type="GO" id="GO:0046872">
    <property type="term" value="F:metal ion binding"/>
    <property type="evidence" value="ECO:0007669"/>
    <property type="project" value="UniProtKB-KW"/>
</dbReference>
<dbReference type="GO" id="GO:0008564">
    <property type="term" value="F:protein-exporting ATPase activity"/>
    <property type="evidence" value="ECO:0007669"/>
    <property type="project" value="UniProtKB-EC"/>
</dbReference>
<dbReference type="GO" id="GO:0065002">
    <property type="term" value="P:intracellular protein transmembrane transport"/>
    <property type="evidence" value="ECO:0007669"/>
    <property type="project" value="UniProtKB-UniRule"/>
</dbReference>
<dbReference type="GO" id="GO:0017038">
    <property type="term" value="P:protein import"/>
    <property type="evidence" value="ECO:0007669"/>
    <property type="project" value="InterPro"/>
</dbReference>
<dbReference type="GO" id="GO:0006605">
    <property type="term" value="P:protein targeting"/>
    <property type="evidence" value="ECO:0007669"/>
    <property type="project" value="UniProtKB-UniRule"/>
</dbReference>
<dbReference type="GO" id="GO:0043952">
    <property type="term" value="P:protein transport by the Sec complex"/>
    <property type="evidence" value="ECO:0007669"/>
    <property type="project" value="TreeGrafter"/>
</dbReference>
<dbReference type="CDD" id="cd17928">
    <property type="entry name" value="DEXDc_SecA"/>
    <property type="match status" value="1"/>
</dbReference>
<dbReference type="CDD" id="cd18803">
    <property type="entry name" value="SF2_C_secA"/>
    <property type="match status" value="1"/>
</dbReference>
<dbReference type="FunFam" id="3.40.50.300:FF:000113">
    <property type="entry name" value="Preprotein translocase subunit SecA"/>
    <property type="match status" value="1"/>
</dbReference>
<dbReference type="FunFam" id="3.40.50.300:FF:000246">
    <property type="entry name" value="Preprotein translocase subunit SecA"/>
    <property type="match status" value="1"/>
</dbReference>
<dbReference type="FunFam" id="3.90.1440.10:FF:000001">
    <property type="entry name" value="Preprotein translocase subunit SecA"/>
    <property type="match status" value="1"/>
</dbReference>
<dbReference type="FunFam" id="1.10.3060.10:FF:000003">
    <property type="entry name" value="Protein translocase subunit SecA"/>
    <property type="match status" value="1"/>
</dbReference>
<dbReference type="FunFam" id="3.40.50.300:FF:000334">
    <property type="entry name" value="Protein translocase subunit SecA"/>
    <property type="match status" value="1"/>
</dbReference>
<dbReference type="Gene3D" id="1.10.3060.10">
    <property type="entry name" value="Helical scaffold and wing domains of SecA"/>
    <property type="match status" value="1"/>
</dbReference>
<dbReference type="Gene3D" id="3.40.50.300">
    <property type="entry name" value="P-loop containing nucleotide triphosphate hydrolases"/>
    <property type="match status" value="2"/>
</dbReference>
<dbReference type="Gene3D" id="3.90.1440.10">
    <property type="entry name" value="SecA, preprotein cross-linking domain"/>
    <property type="match status" value="1"/>
</dbReference>
<dbReference type="HAMAP" id="MF_01382">
    <property type="entry name" value="SecA"/>
    <property type="match status" value="1"/>
</dbReference>
<dbReference type="InterPro" id="IPR014001">
    <property type="entry name" value="Helicase_ATP-bd"/>
</dbReference>
<dbReference type="InterPro" id="IPR001650">
    <property type="entry name" value="Helicase_C-like"/>
</dbReference>
<dbReference type="InterPro" id="IPR027417">
    <property type="entry name" value="P-loop_NTPase"/>
</dbReference>
<dbReference type="InterPro" id="IPR004027">
    <property type="entry name" value="SEC_C_motif"/>
</dbReference>
<dbReference type="InterPro" id="IPR000185">
    <property type="entry name" value="SecA"/>
</dbReference>
<dbReference type="InterPro" id="IPR020937">
    <property type="entry name" value="SecA_CS"/>
</dbReference>
<dbReference type="InterPro" id="IPR011115">
    <property type="entry name" value="SecA_DEAD"/>
</dbReference>
<dbReference type="InterPro" id="IPR014018">
    <property type="entry name" value="SecA_motor_DEAD"/>
</dbReference>
<dbReference type="InterPro" id="IPR011130">
    <property type="entry name" value="SecA_preprotein_X-link_dom"/>
</dbReference>
<dbReference type="InterPro" id="IPR044722">
    <property type="entry name" value="SecA_SF2_C"/>
</dbReference>
<dbReference type="InterPro" id="IPR011116">
    <property type="entry name" value="SecA_Wing/Scaffold"/>
</dbReference>
<dbReference type="InterPro" id="IPR036266">
    <property type="entry name" value="SecA_Wing/Scaffold_sf"/>
</dbReference>
<dbReference type="InterPro" id="IPR036670">
    <property type="entry name" value="SecA_X-link_sf"/>
</dbReference>
<dbReference type="NCBIfam" id="NF009538">
    <property type="entry name" value="PRK12904.1"/>
    <property type="match status" value="1"/>
</dbReference>
<dbReference type="NCBIfam" id="TIGR00963">
    <property type="entry name" value="secA"/>
    <property type="match status" value="1"/>
</dbReference>
<dbReference type="PANTHER" id="PTHR30612:SF0">
    <property type="entry name" value="CHLOROPLAST PROTEIN-TRANSPORTING ATPASE"/>
    <property type="match status" value="1"/>
</dbReference>
<dbReference type="PANTHER" id="PTHR30612">
    <property type="entry name" value="SECA INNER MEMBRANE COMPONENT OF SEC PROTEIN SECRETION SYSTEM"/>
    <property type="match status" value="1"/>
</dbReference>
<dbReference type="Pfam" id="PF21090">
    <property type="entry name" value="P-loop_SecA"/>
    <property type="match status" value="1"/>
</dbReference>
<dbReference type="Pfam" id="PF02810">
    <property type="entry name" value="SEC-C"/>
    <property type="match status" value="1"/>
</dbReference>
<dbReference type="Pfam" id="PF07517">
    <property type="entry name" value="SecA_DEAD"/>
    <property type="match status" value="1"/>
</dbReference>
<dbReference type="Pfam" id="PF01043">
    <property type="entry name" value="SecA_PP_bind"/>
    <property type="match status" value="1"/>
</dbReference>
<dbReference type="Pfam" id="PF07516">
    <property type="entry name" value="SecA_SW"/>
    <property type="match status" value="1"/>
</dbReference>
<dbReference type="PRINTS" id="PR00906">
    <property type="entry name" value="SECA"/>
</dbReference>
<dbReference type="SMART" id="SM00957">
    <property type="entry name" value="SecA_DEAD"/>
    <property type="match status" value="1"/>
</dbReference>
<dbReference type="SMART" id="SM00958">
    <property type="entry name" value="SecA_PP_bind"/>
    <property type="match status" value="1"/>
</dbReference>
<dbReference type="SUPFAM" id="SSF81886">
    <property type="entry name" value="Helical scaffold and wing domains of SecA"/>
    <property type="match status" value="1"/>
</dbReference>
<dbReference type="SUPFAM" id="SSF52540">
    <property type="entry name" value="P-loop containing nucleoside triphosphate hydrolases"/>
    <property type="match status" value="2"/>
</dbReference>
<dbReference type="SUPFAM" id="SSF81767">
    <property type="entry name" value="Pre-protein crosslinking domain of SecA"/>
    <property type="match status" value="1"/>
</dbReference>
<dbReference type="PROSITE" id="PS01312">
    <property type="entry name" value="SECA"/>
    <property type="match status" value="1"/>
</dbReference>
<dbReference type="PROSITE" id="PS51196">
    <property type="entry name" value="SECA_MOTOR_DEAD"/>
    <property type="match status" value="1"/>
</dbReference>
<reference key="1">
    <citation type="submission" date="2007-05" db="EMBL/GenBank/DDBJ databases">
        <title>Complete sequence of Geobacter uraniireducens Rf4.</title>
        <authorList>
            <consortium name="US DOE Joint Genome Institute"/>
            <person name="Copeland A."/>
            <person name="Lucas S."/>
            <person name="Lapidus A."/>
            <person name="Barry K."/>
            <person name="Detter J.C."/>
            <person name="Glavina del Rio T."/>
            <person name="Hammon N."/>
            <person name="Israni S."/>
            <person name="Dalin E."/>
            <person name="Tice H."/>
            <person name="Pitluck S."/>
            <person name="Chertkov O."/>
            <person name="Brettin T."/>
            <person name="Bruce D."/>
            <person name="Han C."/>
            <person name="Schmutz J."/>
            <person name="Larimer F."/>
            <person name="Land M."/>
            <person name="Hauser L."/>
            <person name="Kyrpides N."/>
            <person name="Mikhailova N."/>
            <person name="Shelobolina E."/>
            <person name="Aklujkar M."/>
            <person name="Lovley D."/>
            <person name="Richardson P."/>
        </authorList>
    </citation>
    <scope>NUCLEOTIDE SEQUENCE [LARGE SCALE GENOMIC DNA]</scope>
    <source>
        <strain>ATCC BAA-1134 / JCM 13001 / Rf4</strain>
    </source>
</reference>
<comment type="function">
    <text evidence="1">Part of the Sec protein translocase complex. Interacts with the SecYEG preprotein conducting channel. Has a central role in coupling the hydrolysis of ATP to the transfer of proteins into and across the cell membrane, serving as an ATP-driven molecular motor driving the stepwise translocation of polypeptide chains across the membrane.</text>
</comment>
<comment type="catalytic activity">
    <reaction evidence="1">
        <text>ATP + H2O + cellular proteinSide 1 = ADP + phosphate + cellular proteinSide 2.</text>
        <dbReference type="EC" id="7.4.2.8"/>
    </reaction>
</comment>
<comment type="cofactor">
    <cofactor evidence="1">
        <name>Zn(2+)</name>
        <dbReference type="ChEBI" id="CHEBI:29105"/>
    </cofactor>
    <text evidence="1">May bind 1 zinc ion per subunit.</text>
</comment>
<comment type="subunit">
    <text evidence="1">Monomer and homodimer. Part of the essential Sec protein translocation apparatus which comprises SecA, SecYEG and auxiliary proteins SecDF-YajC and YidC.</text>
</comment>
<comment type="subcellular location">
    <subcellularLocation>
        <location evidence="1">Cell inner membrane</location>
        <topology evidence="1">Peripheral membrane protein</topology>
        <orientation evidence="1">Cytoplasmic side</orientation>
    </subcellularLocation>
    <subcellularLocation>
        <location evidence="1">Cytoplasm</location>
    </subcellularLocation>
    <text evidence="1">Distribution is 50-50.</text>
</comment>
<comment type="similarity">
    <text evidence="1">Belongs to the SecA family.</text>
</comment>
<evidence type="ECO:0000255" key="1">
    <source>
        <dbReference type="HAMAP-Rule" id="MF_01382"/>
    </source>
</evidence>
<evidence type="ECO:0000256" key="2">
    <source>
        <dbReference type="SAM" id="MobiDB-lite"/>
    </source>
</evidence>
<keyword id="KW-0067">ATP-binding</keyword>
<keyword id="KW-0997">Cell inner membrane</keyword>
<keyword id="KW-1003">Cell membrane</keyword>
<keyword id="KW-0963">Cytoplasm</keyword>
<keyword id="KW-0472">Membrane</keyword>
<keyword id="KW-0479">Metal-binding</keyword>
<keyword id="KW-0547">Nucleotide-binding</keyword>
<keyword id="KW-0653">Protein transport</keyword>
<keyword id="KW-1185">Reference proteome</keyword>
<keyword id="KW-1278">Translocase</keyword>
<keyword id="KW-0811">Translocation</keyword>
<keyword id="KW-0813">Transport</keyword>
<keyword id="KW-0862">Zinc</keyword>
<accession>A5GEX9</accession>
<protein>
    <recommendedName>
        <fullName evidence="1">Protein translocase subunit SecA</fullName>
        <ecNumber evidence="1">7.4.2.8</ecNumber>
    </recommendedName>
</protein>
<name>SECA_GEOUR</name>
<feature type="chain" id="PRO_1000087319" description="Protein translocase subunit SecA">
    <location>
        <begin position="1"/>
        <end position="894"/>
    </location>
</feature>
<feature type="region of interest" description="Disordered" evidence="2">
    <location>
        <begin position="857"/>
        <end position="894"/>
    </location>
</feature>
<feature type="binding site" evidence="1">
    <location>
        <position position="87"/>
    </location>
    <ligand>
        <name>ATP</name>
        <dbReference type="ChEBI" id="CHEBI:30616"/>
    </ligand>
</feature>
<feature type="binding site" evidence="1">
    <location>
        <begin position="105"/>
        <end position="109"/>
    </location>
    <ligand>
        <name>ATP</name>
        <dbReference type="ChEBI" id="CHEBI:30616"/>
    </ligand>
</feature>
<feature type="binding site" evidence="1">
    <location>
        <position position="512"/>
    </location>
    <ligand>
        <name>ATP</name>
        <dbReference type="ChEBI" id="CHEBI:30616"/>
    </ligand>
</feature>
<feature type="binding site" evidence="1">
    <location>
        <position position="880"/>
    </location>
    <ligand>
        <name>Zn(2+)</name>
        <dbReference type="ChEBI" id="CHEBI:29105"/>
    </ligand>
</feature>
<feature type="binding site" evidence="1">
    <location>
        <position position="882"/>
    </location>
    <ligand>
        <name>Zn(2+)</name>
        <dbReference type="ChEBI" id="CHEBI:29105"/>
    </ligand>
</feature>
<feature type="binding site" evidence="1">
    <location>
        <position position="891"/>
    </location>
    <ligand>
        <name>Zn(2+)</name>
        <dbReference type="ChEBI" id="CHEBI:29105"/>
    </ligand>
</feature>
<feature type="binding site" evidence="1">
    <location>
        <position position="892"/>
    </location>
    <ligand>
        <name>Zn(2+)</name>
        <dbReference type="ChEBI" id="CHEBI:29105"/>
    </ligand>
</feature>
<proteinExistence type="inferred from homology"/>
<gene>
    <name evidence="1" type="primary">secA</name>
    <name type="ordered locus">Gura_1794</name>
</gene>
<organism>
    <name type="scientific">Geotalea uraniireducens (strain Rf4)</name>
    <name type="common">Geobacter uraniireducens</name>
    <dbReference type="NCBI Taxonomy" id="351605"/>
    <lineage>
        <taxon>Bacteria</taxon>
        <taxon>Pseudomonadati</taxon>
        <taxon>Thermodesulfobacteriota</taxon>
        <taxon>Desulfuromonadia</taxon>
        <taxon>Geobacterales</taxon>
        <taxon>Geobacteraceae</taxon>
        <taxon>Geotalea</taxon>
    </lineage>
</organism>